<feature type="chain" id="PRO_0000423483" description="Nicotinamide/nicotinic acid mononucleotide adenylyltransferase">
    <location>
        <begin position="1"/>
        <end position="249"/>
    </location>
</feature>
<feature type="binding site" evidence="1">
    <location>
        <position position="34"/>
    </location>
    <ligand>
        <name>NAD(+)</name>
        <dbReference type="ChEBI" id="CHEBI:57540"/>
    </ligand>
</feature>
<feature type="binding site" evidence="1">
    <location>
        <position position="35"/>
    </location>
    <ligand>
        <name>NAD(+)</name>
        <dbReference type="ChEBI" id="CHEBI:57540"/>
    </ligand>
</feature>
<feature type="binding site" description="in other chain" evidence="1">
    <location>
        <position position="42"/>
    </location>
    <ligand>
        <name>ATP</name>
        <dbReference type="ChEBI" id="CHEBI:30616"/>
        <note>ligand shared between dimeric partners</note>
    </ligand>
</feature>
<feature type="binding site" description="in other chain" evidence="1">
    <location>
        <position position="75"/>
    </location>
    <ligand>
        <name>ATP</name>
        <dbReference type="ChEBI" id="CHEBI:30616"/>
        <note>ligand shared between dimeric partners</note>
    </ligand>
</feature>
<feature type="binding site" evidence="1">
    <location>
        <position position="112"/>
    </location>
    <ligand>
        <name>NAD(+)</name>
        <dbReference type="ChEBI" id="CHEBI:57540"/>
    </ligand>
</feature>
<feature type="binding site" evidence="1">
    <location>
        <position position="141"/>
    </location>
    <ligand>
        <name>NAD(+)</name>
        <dbReference type="ChEBI" id="CHEBI:57540"/>
    </ligand>
</feature>
<feature type="binding site" evidence="1">
    <location>
        <position position="143"/>
    </location>
    <ligand>
        <name>NAD(+)</name>
        <dbReference type="ChEBI" id="CHEBI:57540"/>
    </ligand>
</feature>
<feature type="binding site" evidence="1">
    <location>
        <position position="154"/>
    </location>
    <ligand>
        <name>NAD(+)</name>
        <dbReference type="ChEBI" id="CHEBI:57540"/>
    </ligand>
</feature>
<feature type="binding site" evidence="1">
    <location>
        <position position="173"/>
    </location>
    <ligand>
        <name>NAD(+)</name>
        <dbReference type="ChEBI" id="CHEBI:57540"/>
    </ligand>
</feature>
<feature type="binding site" evidence="1">
    <location>
        <position position="204"/>
    </location>
    <ligand>
        <name>NAD(+)</name>
        <dbReference type="ChEBI" id="CHEBI:57540"/>
    </ligand>
</feature>
<feature type="binding site" description="in other chain" evidence="1">
    <location>
        <begin position="209"/>
        <end position="210"/>
    </location>
    <ligand>
        <name>ATP</name>
        <dbReference type="ChEBI" id="CHEBI:30616"/>
        <note>ligand shared between dimeric partners</note>
    </ligand>
</feature>
<comment type="function">
    <text evidence="2">Catalyzes the formation of NAD(+) from nicotinamide mononucleotide (NMN) and ATP. Can also use the deamidated form; nicotinic acid mononucleotide (NaMN) as substrate.</text>
</comment>
<comment type="catalytic activity">
    <reaction evidence="2">
        <text>beta-nicotinamide D-ribonucleotide + ATP + H(+) = diphosphate + NAD(+)</text>
        <dbReference type="Rhea" id="RHEA:21360"/>
        <dbReference type="ChEBI" id="CHEBI:14649"/>
        <dbReference type="ChEBI" id="CHEBI:15378"/>
        <dbReference type="ChEBI" id="CHEBI:30616"/>
        <dbReference type="ChEBI" id="CHEBI:33019"/>
        <dbReference type="ChEBI" id="CHEBI:57540"/>
        <dbReference type="EC" id="2.7.7.1"/>
    </reaction>
</comment>
<comment type="catalytic activity">
    <reaction evidence="2">
        <text>nicotinate beta-D-ribonucleotide + ATP + H(+) = deamido-NAD(+) + diphosphate</text>
        <dbReference type="Rhea" id="RHEA:22860"/>
        <dbReference type="ChEBI" id="CHEBI:15378"/>
        <dbReference type="ChEBI" id="CHEBI:30616"/>
        <dbReference type="ChEBI" id="CHEBI:33019"/>
        <dbReference type="ChEBI" id="CHEBI:57502"/>
        <dbReference type="ChEBI" id="CHEBI:58437"/>
        <dbReference type="EC" id="2.7.7.18"/>
    </reaction>
</comment>
<comment type="cofactor">
    <cofactor evidence="2">
        <name>a divalent metal cation</name>
        <dbReference type="ChEBI" id="CHEBI:60240"/>
    </cofactor>
</comment>
<comment type="pathway">
    <text evidence="2">Cofactor biosynthesis; NAD(+) biosynthesis; deamido-NAD(+) from nicotinate D-ribonucleotide: step 1/1.</text>
</comment>
<comment type="pathway">
    <text evidence="2">Cofactor biosynthesis; NAD(+) biosynthesis; NAD(+) from nicotinamide D-ribonucleotide: step 1/1.</text>
</comment>
<comment type="similarity">
    <text evidence="3">Belongs to the eukaryotic NMN adenylyltransferase family.</text>
</comment>
<comment type="sequence caution" evidence="3">
    <conflict type="erroneous gene model prediction">
        <sequence resource="EMBL-CDS" id="BAD21670"/>
    </conflict>
</comment>
<comment type="sequence caution" evidence="3">
    <conflict type="erroneous initiation">
        <sequence resource="EMBL-CDS" id="BAF10411"/>
    </conflict>
    <text>Extended N-terminus.</text>
</comment>
<comment type="sequence caution" evidence="3">
    <conflict type="erroneous initiation">
        <sequence resource="EMBL-CDS" id="EAZ25062"/>
    </conflict>
    <text>Extended N-terminus.</text>
</comment>
<organism>
    <name type="scientific">Oryza sativa subsp. japonica</name>
    <name type="common">Rice</name>
    <dbReference type="NCBI Taxonomy" id="39947"/>
    <lineage>
        <taxon>Eukaryota</taxon>
        <taxon>Viridiplantae</taxon>
        <taxon>Streptophyta</taxon>
        <taxon>Embryophyta</taxon>
        <taxon>Tracheophyta</taxon>
        <taxon>Spermatophyta</taxon>
        <taxon>Magnoliopsida</taxon>
        <taxon>Liliopsida</taxon>
        <taxon>Poales</taxon>
        <taxon>Poaceae</taxon>
        <taxon>BOP clade</taxon>
        <taxon>Oryzoideae</taxon>
        <taxon>Oryzeae</taxon>
        <taxon>Oryzinae</taxon>
        <taxon>Oryza</taxon>
        <taxon>Oryza sativa</taxon>
    </lineage>
</organism>
<dbReference type="EC" id="2.7.7.1"/>
<dbReference type="EC" id="2.7.7.18"/>
<dbReference type="EMBL" id="AP004120">
    <property type="protein sequence ID" value="BAD21670.1"/>
    <property type="status" value="ALT_SEQ"/>
    <property type="molecule type" value="Genomic_DNA"/>
</dbReference>
<dbReference type="EMBL" id="AP008208">
    <property type="protein sequence ID" value="BAF10411.1"/>
    <property type="status" value="ALT_INIT"/>
    <property type="molecule type" value="Genomic_DNA"/>
</dbReference>
<dbReference type="EMBL" id="AP014958">
    <property type="status" value="NOT_ANNOTATED_CDS"/>
    <property type="molecule type" value="Genomic_DNA"/>
</dbReference>
<dbReference type="EMBL" id="CM000139">
    <property type="protein sequence ID" value="EAZ25062.1"/>
    <property type="status" value="ALT_INIT"/>
    <property type="molecule type" value="Genomic_DNA"/>
</dbReference>
<dbReference type="RefSeq" id="XP_015625815.1">
    <property type="nucleotide sequence ID" value="XM_015770329.1"/>
</dbReference>
<dbReference type="SMR" id="Q0DWH7"/>
<dbReference type="FunCoup" id="Q0DWH7">
    <property type="interactions" value="1399"/>
</dbReference>
<dbReference type="STRING" id="39947.Q0DWH7"/>
<dbReference type="PaxDb" id="39947-Q0DWH7"/>
<dbReference type="KEGG" id="dosa:Os02g0814900"/>
<dbReference type="eggNOG" id="KOG3199">
    <property type="taxonomic scope" value="Eukaryota"/>
</dbReference>
<dbReference type="InParanoid" id="Q0DWH7"/>
<dbReference type="OrthoDB" id="422187at2759"/>
<dbReference type="UniPathway" id="UPA00253">
    <property type="reaction ID" value="UER00332"/>
</dbReference>
<dbReference type="UniPathway" id="UPA00253">
    <property type="reaction ID" value="UER00600"/>
</dbReference>
<dbReference type="Proteomes" id="UP000000763">
    <property type="component" value="Chromosome 2"/>
</dbReference>
<dbReference type="Proteomes" id="UP000007752">
    <property type="component" value="Chromosome 2"/>
</dbReference>
<dbReference type="Proteomes" id="UP000059680">
    <property type="component" value="Chromosome 2"/>
</dbReference>
<dbReference type="GO" id="GO:0005524">
    <property type="term" value="F:ATP binding"/>
    <property type="evidence" value="ECO:0007669"/>
    <property type="project" value="UniProtKB-KW"/>
</dbReference>
<dbReference type="GO" id="GO:0046872">
    <property type="term" value="F:metal ion binding"/>
    <property type="evidence" value="ECO:0007669"/>
    <property type="project" value="UniProtKB-KW"/>
</dbReference>
<dbReference type="GO" id="GO:0000309">
    <property type="term" value="F:nicotinamide-nucleotide adenylyltransferase activity"/>
    <property type="evidence" value="ECO:0000318"/>
    <property type="project" value="GO_Central"/>
</dbReference>
<dbReference type="GO" id="GO:0004515">
    <property type="term" value="F:nicotinate-nucleotide adenylyltransferase activity"/>
    <property type="evidence" value="ECO:0000318"/>
    <property type="project" value="GO_Central"/>
</dbReference>
<dbReference type="GO" id="GO:0009435">
    <property type="term" value="P:NAD biosynthetic process"/>
    <property type="evidence" value="ECO:0000318"/>
    <property type="project" value="GO_Central"/>
</dbReference>
<dbReference type="CDD" id="cd09286">
    <property type="entry name" value="NMNAT_Eukarya"/>
    <property type="match status" value="1"/>
</dbReference>
<dbReference type="FunFam" id="3.40.50.620:FF:000200">
    <property type="entry name" value="Nicotinamide-nucleotide adenylyltransferase"/>
    <property type="match status" value="1"/>
</dbReference>
<dbReference type="Gene3D" id="3.40.50.620">
    <property type="entry name" value="HUPs"/>
    <property type="match status" value="1"/>
</dbReference>
<dbReference type="InterPro" id="IPR004821">
    <property type="entry name" value="Cyt_trans-like"/>
</dbReference>
<dbReference type="InterPro" id="IPR051182">
    <property type="entry name" value="Euk_NMN_adenylyltrnsfrase"/>
</dbReference>
<dbReference type="InterPro" id="IPR005248">
    <property type="entry name" value="NadD/NMNAT"/>
</dbReference>
<dbReference type="InterPro" id="IPR045094">
    <property type="entry name" value="NMNAT_euk"/>
</dbReference>
<dbReference type="InterPro" id="IPR014729">
    <property type="entry name" value="Rossmann-like_a/b/a_fold"/>
</dbReference>
<dbReference type="NCBIfam" id="TIGR00482">
    <property type="entry name" value="nicotinate (nicotinamide) nucleotide adenylyltransferase"/>
    <property type="match status" value="1"/>
</dbReference>
<dbReference type="PANTHER" id="PTHR12039">
    <property type="entry name" value="NICOTINAMIDE MONONUCLEOTIDE ADENYLYLTRANSFERASE"/>
    <property type="match status" value="1"/>
</dbReference>
<dbReference type="PANTHER" id="PTHR12039:SF0">
    <property type="entry name" value="NICOTINAMIDE-NUCLEOTIDE ADENYLYLTRANSFERASE"/>
    <property type="match status" value="1"/>
</dbReference>
<dbReference type="Pfam" id="PF01467">
    <property type="entry name" value="CTP_transf_like"/>
    <property type="match status" value="1"/>
</dbReference>
<dbReference type="SUPFAM" id="SSF52374">
    <property type="entry name" value="Nucleotidylyl transferase"/>
    <property type="match status" value="1"/>
</dbReference>
<protein>
    <recommendedName>
        <fullName evidence="3">Nicotinamide/nicotinic acid mononucleotide adenylyltransferase</fullName>
        <shortName>NMN/NaMN adenylyltransferase</shortName>
        <ecNumber>2.7.7.1</ecNumber>
        <ecNumber>2.7.7.18</ecNumber>
    </recommendedName>
    <alternativeName>
        <fullName>Nicotinamide mononucleotide adenylyltransferase</fullName>
        <shortName>NMN adenylyltransferase</shortName>
    </alternativeName>
    <alternativeName>
        <fullName>Nicotinate-nucleotide adenylyltransferase</fullName>
        <shortName>NaMN adenylyltransferase</shortName>
    </alternativeName>
</protein>
<proteinExistence type="inferred from homology"/>
<name>NMNAT_ORYSJ</name>
<evidence type="ECO:0000250" key="1">
    <source>
        <dbReference type="UniProtKB" id="Q96T66"/>
    </source>
</evidence>
<evidence type="ECO:0000250" key="2">
    <source>
        <dbReference type="UniProtKB" id="Q9HAN9"/>
    </source>
</evidence>
<evidence type="ECO:0000305" key="3"/>
<keyword id="KW-0067">ATP-binding</keyword>
<keyword id="KW-0479">Metal-binding</keyword>
<keyword id="KW-0520">NAD</keyword>
<keyword id="KW-0547">Nucleotide-binding</keyword>
<keyword id="KW-0548">Nucleotidyltransferase</keyword>
<keyword id="KW-0662">Pyridine nucleotide biosynthesis</keyword>
<keyword id="KW-1185">Reference proteome</keyword>
<keyword id="KW-0808">Transferase</keyword>
<sequence>MEELELPLPTEKLAVDPGREGGKRGVAVLVATGSFNPPTYMHLRMFELAKDELQQRGYSVLGGYMSPVNDAYKKKGLLSAAHRIRLCELACESSSFVMVDRWEAMQKGFQRTLTVLSRIRNALSKDGLADGGSPNVMLLCGSDLLESFSTPGVWIPDQVRIICKDFGVICIRREGKDVEKIISSSEILNECRDNIISVDEIVPNQISSSRVRECIKKCLSIKYLVCDEVIQYIGEHKLYKEADGSDTRK</sequence>
<reference key="1">
    <citation type="journal article" date="2005" name="Nature">
        <title>The map-based sequence of the rice genome.</title>
        <authorList>
            <consortium name="International rice genome sequencing project (IRGSP)"/>
        </authorList>
    </citation>
    <scope>NUCLEOTIDE SEQUENCE [LARGE SCALE GENOMIC DNA]</scope>
    <source>
        <strain>cv. Nipponbare</strain>
    </source>
</reference>
<reference key="2">
    <citation type="journal article" date="2008" name="Nucleic Acids Res.">
        <title>The rice annotation project database (RAP-DB): 2008 update.</title>
        <authorList>
            <consortium name="The rice annotation project (RAP)"/>
        </authorList>
    </citation>
    <scope>GENOME REANNOTATION</scope>
    <source>
        <strain>cv. Nipponbare</strain>
    </source>
</reference>
<reference key="3">
    <citation type="journal article" date="2013" name="Rice">
        <title>Improvement of the Oryza sativa Nipponbare reference genome using next generation sequence and optical map data.</title>
        <authorList>
            <person name="Kawahara Y."/>
            <person name="de la Bastide M."/>
            <person name="Hamilton J.P."/>
            <person name="Kanamori H."/>
            <person name="McCombie W.R."/>
            <person name="Ouyang S."/>
            <person name="Schwartz D.C."/>
            <person name="Tanaka T."/>
            <person name="Wu J."/>
            <person name="Zhou S."/>
            <person name="Childs K.L."/>
            <person name="Davidson R.M."/>
            <person name="Lin H."/>
            <person name="Quesada-Ocampo L."/>
            <person name="Vaillancourt B."/>
            <person name="Sakai H."/>
            <person name="Lee S.S."/>
            <person name="Kim J."/>
            <person name="Numa H."/>
            <person name="Itoh T."/>
            <person name="Buell C.R."/>
            <person name="Matsumoto T."/>
        </authorList>
    </citation>
    <scope>GENOME REANNOTATION</scope>
    <source>
        <strain>cv. Nipponbare</strain>
    </source>
</reference>
<reference key="4">
    <citation type="journal article" date="2005" name="PLoS Biol.">
        <title>The genomes of Oryza sativa: a history of duplications.</title>
        <authorList>
            <person name="Yu J."/>
            <person name="Wang J."/>
            <person name="Lin W."/>
            <person name="Li S."/>
            <person name="Li H."/>
            <person name="Zhou J."/>
            <person name="Ni P."/>
            <person name="Dong W."/>
            <person name="Hu S."/>
            <person name="Zeng C."/>
            <person name="Zhang J."/>
            <person name="Zhang Y."/>
            <person name="Li R."/>
            <person name="Xu Z."/>
            <person name="Li S."/>
            <person name="Li X."/>
            <person name="Zheng H."/>
            <person name="Cong L."/>
            <person name="Lin L."/>
            <person name="Yin J."/>
            <person name="Geng J."/>
            <person name="Li G."/>
            <person name="Shi J."/>
            <person name="Liu J."/>
            <person name="Lv H."/>
            <person name="Li J."/>
            <person name="Wang J."/>
            <person name="Deng Y."/>
            <person name="Ran L."/>
            <person name="Shi X."/>
            <person name="Wang X."/>
            <person name="Wu Q."/>
            <person name="Li C."/>
            <person name="Ren X."/>
            <person name="Wang J."/>
            <person name="Wang X."/>
            <person name="Li D."/>
            <person name="Liu D."/>
            <person name="Zhang X."/>
            <person name="Ji Z."/>
            <person name="Zhao W."/>
            <person name="Sun Y."/>
            <person name="Zhang Z."/>
            <person name="Bao J."/>
            <person name="Han Y."/>
            <person name="Dong L."/>
            <person name="Ji J."/>
            <person name="Chen P."/>
            <person name="Wu S."/>
            <person name="Liu J."/>
            <person name="Xiao Y."/>
            <person name="Bu D."/>
            <person name="Tan J."/>
            <person name="Yang L."/>
            <person name="Ye C."/>
            <person name="Zhang J."/>
            <person name="Xu J."/>
            <person name="Zhou Y."/>
            <person name="Yu Y."/>
            <person name="Zhang B."/>
            <person name="Zhuang S."/>
            <person name="Wei H."/>
            <person name="Liu B."/>
            <person name="Lei M."/>
            <person name="Yu H."/>
            <person name="Li Y."/>
            <person name="Xu H."/>
            <person name="Wei S."/>
            <person name="He X."/>
            <person name="Fang L."/>
            <person name="Zhang Z."/>
            <person name="Zhang Y."/>
            <person name="Huang X."/>
            <person name="Su Z."/>
            <person name="Tong W."/>
            <person name="Li J."/>
            <person name="Tong Z."/>
            <person name="Li S."/>
            <person name="Ye J."/>
            <person name="Wang L."/>
            <person name="Fang L."/>
            <person name="Lei T."/>
            <person name="Chen C.-S."/>
            <person name="Chen H.-C."/>
            <person name="Xu Z."/>
            <person name="Li H."/>
            <person name="Huang H."/>
            <person name="Zhang F."/>
            <person name="Xu H."/>
            <person name="Li N."/>
            <person name="Zhao C."/>
            <person name="Li S."/>
            <person name="Dong L."/>
            <person name="Huang Y."/>
            <person name="Li L."/>
            <person name="Xi Y."/>
            <person name="Qi Q."/>
            <person name="Li W."/>
            <person name="Zhang B."/>
            <person name="Hu W."/>
            <person name="Zhang Y."/>
            <person name="Tian X."/>
            <person name="Jiao Y."/>
            <person name="Liang X."/>
            <person name="Jin J."/>
            <person name="Gao L."/>
            <person name="Zheng W."/>
            <person name="Hao B."/>
            <person name="Liu S.-M."/>
            <person name="Wang W."/>
            <person name="Yuan L."/>
            <person name="Cao M."/>
            <person name="McDermott J."/>
            <person name="Samudrala R."/>
            <person name="Wang J."/>
            <person name="Wong G.K.-S."/>
            <person name="Yang H."/>
        </authorList>
    </citation>
    <scope>NUCLEOTIDE SEQUENCE [LARGE SCALE GENOMIC DNA]</scope>
    <source>
        <strain>cv. Nipponbare</strain>
    </source>
</reference>
<accession>Q0DWH7</accession>
<accession>Q6K8N8</accession>
<gene>
    <name type="ordered locus">Os02g0814900</name>
    <name type="ordered locus">LOC_Os02g56980</name>
    <name type="ORF">OJ1293_E04.25</name>
    <name type="ORF">OsJ_08854</name>
</gene>